<gene>
    <name type="primary">MT-CYB</name>
    <name type="synonym">COB</name>
    <name type="synonym">CYTB</name>
    <name type="synonym">MTCYB</name>
</gene>
<organism>
    <name type="scientific">Chilabothrus strigilatus strigilatus</name>
    <name type="common">New Providence boa constrictor</name>
    <name type="synonym">Epicrates strigilatus strigilatus</name>
    <dbReference type="NCBI Taxonomy" id="51741"/>
    <lineage>
        <taxon>Eukaryota</taxon>
        <taxon>Metazoa</taxon>
        <taxon>Chordata</taxon>
        <taxon>Craniata</taxon>
        <taxon>Vertebrata</taxon>
        <taxon>Euteleostomi</taxon>
        <taxon>Lepidosauria</taxon>
        <taxon>Squamata</taxon>
        <taxon>Bifurcata</taxon>
        <taxon>Unidentata</taxon>
        <taxon>Episquamata</taxon>
        <taxon>Toxicofera</taxon>
        <taxon>Serpentes</taxon>
        <taxon>Henophidia</taxon>
        <taxon>Boidae</taxon>
        <taxon>Boinae</taxon>
        <taxon>Chilabothrus</taxon>
    </lineage>
</organism>
<sequence>MPHQQILMLFGLLPVATNISTWWNFGSMLLACLTLQLLTGFFLAVHYTANINLAFSSIIHITRDVPYGWMMQNLHAIGASMFFICIYIHIARGLYYGSYLNKETWLSGTTLLIMLMATAFFGYVLPWGQMSFWAATVITNLLTAIPYLGSTMTTWLWGGFAINDPTLTRFFALHFILPFGIISLSSLHILLLHEEGSSNPLGTNSDIDKIPFHPYQTYKDMLMLTIMTIMLLTIVSFFPDIFNDPDNFSKANPLVTPQHIKPEWYFLFTYGILRSIPNKLGGALALTMSIMMLLTLPFTHTSKLRSMMFRPLMQLTFWTFTATFLVISWTATKPVEPPFTTISQVAALMYFLFFISNPIMGWLENKIMKL</sequence>
<name>CYB_CHISS</name>
<protein>
    <recommendedName>
        <fullName>Cytochrome b</fullName>
    </recommendedName>
    <alternativeName>
        <fullName>Complex III subunit 3</fullName>
    </alternativeName>
    <alternativeName>
        <fullName>Complex III subunit III</fullName>
    </alternativeName>
    <alternativeName>
        <fullName>Cytochrome b-c1 complex subunit 3</fullName>
    </alternativeName>
    <alternativeName>
        <fullName>Ubiquinol-cytochrome-c reductase complex cytochrome b subunit</fullName>
    </alternativeName>
</protein>
<keyword id="KW-0249">Electron transport</keyword>
<keyword id="KW-0349">Heme</keyword>
<keyword id="KW-0408">Iron</keyword>
<keyword id="KW-0472">Membrane</keyword>
<keyword id="KW-0479">Metal-binding</keyword>
<keyword id="KW-0496">Mitochondrion</keyword>
<keyword id="KW-0999">Mitochondrion inner membrane</keyword>
<keyword id="KW-0679">Respiratory chain</keyword>
<keyword id="KW-0812">Transmembrane</keyword>
<keyword id="KW-1133">Transmembrane helix</keyword>
<keyword id="KW-0813">Transport</keyword>
<keyword id="KW-0830">Ubiquinone</keyword>
<proteinExistence type="inferred from homology"/>
<accession>O48057</accession>
<feature type="chain" id="PRO_0000060930" description="Cytochrome b">
    <location>
        <begin position="1"/>
        <end position="370"/>
    </location>
</feature>
<feature type="transmembrane region" description="Helical" evidence="2">
    <location>
        <begin position="25"/>
        <end position="45"/>
    </location>
</feature>
<feature type="transmembrane region" description="Helical" evidence="2">
    <location>
        <begin position="69"/>
        <end position="90"/>
    </location>
</feature>
<feature type="transmembrane region" description="Helical" evidence="2">
    <location>
        <begin position="105"/>
        <end position="125"/>
    </location>
</feature>
<feature type="transmembrane region" description="Helical" evidence="2">
    <location>
        <begin position="170"/>
        <end position="190"/>
    </location>
</feature>
<feature type="transmembrane region" description="Helical" evidence="2">
    <location>
        <begin position="218"/>
        <end position="238"/>
    </location>
</feature>
<feature type="transmembrane region" description="Helical" evidence="2">
    <location>
        <begin position="280"/>
        <end position="300"/>
    </location>
</feature>
<feature type="transmembrane region" description="Helical" evidence="2">
    <location>
        <begin position="312"/>
        <end position="332"/>
    </location>
</feature>
<feature type="transmembrane region" description="Helical" evidence="2">
    <location>
        <begin position="339"/>
        <end position="358"/>
    </location>
</feature>
<feature type="binding site" description="axial binding residue" evidence="2">
    <location>
        <position position="75"/>
    </location>
    <ligand>
        <name>heme b</name>
        <dbReference type="ChEBI" id="CHEBI:60344"/>
        <label>b562</label>
    </ligand>
    <ligandPart>
        <name>Fe</name>
        <dbReference type="ChEBI" id="CHEBI:18248"/>
    </ligandPart>
</feature>
<feature type="binding site" description="axial binding residue" evidence="2">
    <location>
        <position position="89"/>
    </location>
    <ligand>
        <name>heme b</name>
        <dbReference type="ChEBI" id="CHEBI:60344"/>
        <label>b566</label>
    </ligand>
    <ligandPart>
        <name>Fe</name>
        <dbReference type="ChEBI" id="CHEBI:18248"/>
    </ligandPart>
</feature>
<feature type="binding site" description="axial binding residue" evidence="2">
    <location>
        <position position="174"/>
    </location>
    <ligand>
        <name>heme b</name>
        <dbReference type="ChEBI" id="CHEBI:60344"/>
        <label>b562</label>
    </ligand>
    <ligandPart>
        <name>Fe</name>
        <dbReference type="ChEBI" id="CHEBI:18248"/>
    </ligandPart>
</feature>
<feature type="binding site" description="axial binding residue" evidence="2">
    <location>
        <position position="188"/>
    </location>
    <ligand>
        <name>heme b</name>
        <dbReference type="ChEBI" id="CHEBI:60344"/>
        <label>b566</label>
    </ligand>
    <ligandPart>
        <name>Fe</name>
        <dbReference type="ChEBI" id="CHEBI:18248"/>
    </ligandPart>
</feature>
<feature type="binding site" evidence="2">
    <location>
        <position position="193"/>
    </location>
    <ligand>
        <name>a ubiquinone</name>
        <dbReference type="ChEBI" id="CHEBI:16389"/>
    </ligand>
</feature>
<reference key="1">
    <citation type="thesis" date="1997" institute="Queen's University / Kingston" country="Canada">
        <title>Hic Sunt Serpentes -- molecular phylogenetics and the Boidae (Serpentes: Booidea).</title>
        <authorList>
            <person name="Campbell B.N."/>
        </authorList>
    </citation>
    <scope>NUCLEOTIDE SEQUENCE [GENOMIC DNA]</scope>
</reference>
<comment type="function">
    <text evidence="2">Component of the ubiquinol-cytochrome c reductase complex (complex III or cytochrome b-c1 complex) that is part of the mitochondrial respiratory chain. The b-c1 complex mediates electron transfer from ubiquinol to cytochrome c. Contributes to the generation of a proton gradient across the mitochondrial membrane that is then used for ATP synthesis.</text>
</comment>
<comment type="cofactor">
    <cofactor evidence="2">
        <name>heme b</name>
        <dbReference type="ChEBI" id="CHEBI:60344"/>
    </cofactor>
    <text evidence="2">Binds 2 heme b groups non-covalently.</text>
</comment>
<comment type="subunit">
    <text evidence="2">The cytochrome bc1 complex contains 3 respiratory subunits (MT-CYB, CYC1 and UQCRFS1), 2 core proteins (UQCRC1 and UQCRC2) and probably 6 low-molecular weight proteins.</text>
</comment>
<comment type="subcellular location">
    <subcellularLocation>
        <location evidence="2">Mitochondrion inner membrane</location>
        <topology evidence="2">Multi-pass membrane protein</topology>
    </subcellularLocation>
</comment>
<comment type="miscellaneous">
    <text evidence="1">Heme 1 (or BL or b562) is low-potential and absorbs at about 562 nm, and heme 2 (or BH or b566) is high-potential and absorbs at about 566 nm.</text>
</comment>
<comment type="similarity">
    <text evidence="3 4">Belongs to the cytochrome b family.</text>
</comment>
<comment type="caution">
    <text evidence="2">The full-length protein contains only eight transmembrane helices, not nine as predicted by bioinformatics tools.</text>
</comment>
<geneLocation type="mitochondrion"/>
<evidence type="ECO:0000250" key="1"/>
<evidence type="ECO:0000250" key="2">
    <source>
        <dbReference type="UniProtKB" id="P00157"/>
    </source>
</evidence>
<evidence type="ECO:0000255" key="3">
    <source>
        <dbReference type="PROSITE-ProRule" id="PRU00967"/>
    </source>
</evidence>
<evidence type="ECO:0000255" key="4">
    <source>
        <dbReference type="PROSITE-ProRule" id="PRU00968"/>
    </source>
</evidence>
<dbReference type="EMBL" id="U69795">
    <property type="protein sequence ID" value="AAC01848.1"/>
    <property type="molecule type" value="Genomic_DNA"/>
</dbReference>
<dbReference type="EMBL" id="U69796">
    <property type="protein sequence ID" value="AAC01849.1"/>
    <property type="molecule type" value="Genomic_DNA"/>
</dbReference>
<dbReference type="SMR" id="O48057"/>
<dbReference type="GO" id="GO:0005743">
    <property type="term" value="C:mitochondrial inner membrane"/>
    <property type="evidence" value="ECO:0007669"/>
    <property type="project" value="UniProtKB-SubCell"/>
</dbReference>
<dbReference type="GO" id="GO:0045275">
    <property type="term" value="C:respiratory chain complex III"/>
    <property type="evidence" value="ECO:0007669"/>
    <property type="project" value="InterPro"/>
</dbReference>
<dbReference type="GO" id="GO:0046872">
    <property type="term" value="F:metal ion binding"/>
    <property type="evidence" value="ECO:0007669"/>
    <property type="project" value="UniProtKB-KW"/>
</dbReference>
<dbReference type="GO" id="GO:0008121">
    <property type="term" value="F:ubiquinol-cytochrome-c reductase activity"/>
    <property type="evidence" value="ECO:0007669"/>
    <property type="project" value="InterPro"/>
</dbReference>
<dbReference type="GO" id="GO:0006122">
    <property type="term" value="P:mitochondrial electron transport, ubiquinol to cytochrome c"/>
    <property type="evidence" value="ECO:0007669"/>
    <property type="project" value="TreeGrafter"/>
</dbReference>
<dbReference type="CDD" id="cd00290">
    <property type="entry name" value="cytochrome_b_C"/>
    <property type="match status" value="1"/>
</dbReference>
<dbReference type="CDD" id="cd00284">
    <property type="entry name" value="Cytochrome_b_N"/>
    <property type="match status" value="1"/>
</dbReference>
<dbReference type="Gene3D" id="1.20.810.10">
    <property type="entry name" value="Cytochrome Bc1 Complex, Chain C"/>
    <property type="match status" value="1"/>
</dbReference>
<dbReference type="InterPro" id="IPR005798">
    <property type="entry name" value="Cyt_b/b6_C"/>
</dbReference>
<dbReference type="InterPro" id="IPR036150">
    <property type="entry name" value="Cyt_b/b6_C_sf"/>
</dbReference>
<dbReference type="InterPro" id="IPR005797">
    <property type="entry name" value="Cyt_b/b6_N"/>
</dbReference>
<dbReference type="InterPro" id="IPR027387">
    <property type="entry name" value="Cytb/b6-like_sf"/>
</dbReference>
<dbReference type="InterPro" id="IPR030689">
    <property type="entry name" value="Cytochrome_b"/>
</dbReference>
<dbReference type="InterPro" id="IPR048260">
    <property type="entry name" value="Cytochrome_b_C_euk/bac"/>
</dbReference>
<dbReference type="InterPro" id="IPR048259">
    <property type="entry name" value="Cytochrome_b_N_euk/bac"/>
</dbReference>
<dbReference type="InterPro" id="IPR016174">
    <property type="entry name" value="Di-haem_cyt_TM"/>
</dbReference>
<dbReference type="PANTHER" id="PTHR19271">
    <property type="entry name" value="CYTOCHROME B"/>
    <property type="match status" value="1"/>
</dbReference>
<dbReference type="PANTHER" id="PTHR19271:SF16">
    <property type="entry name" value="CYTOCHROME B"/>
    <property type="match status" value="1"/>
</dbReference>
<dbReference type="Pfam" id="PF00032">
    <property type="entry name" value="Cytochrom_B_C"/>
    <property type="match status" value="1"/>
</dbReference>
<dbReference type="Pfam" id="PF00033">
    <property type="entry name" value="Cytochrome_B"/>
    <property type="match status" value="1"/>
</dbReference>
<dbReference type="PIRSF" id="PIRSF038885">
    <property type="entry name" value="COB"/>
    <property type="match status" value="1"/>
</dbReference>
<dbReference type="SUPFAM" id="SSF81648">
    <property type="entry name" value="a domain/subunit of cytochrome bc1 complex (Ubiquinol-cytochrome c reductase)"/>
    <property type="match status" value="1"/>
</dbReference>
<dbReference type="SUPFAM" id="SSF81342">
    <property type="entry name" value="Transmembrane di-heme cytochromes"/>
    <property type="match status" value="1"/>
</dbReference>
<dbReference type="PROSITE" id="PS51003">
    <property type="entry name" value="CYTB_CTER"/>
    <property type="match status" value="1"/>
</dbReference>
<dbReference type="PROSITE" id="PS51002">
    <property type="entry name" value="CYTB_NTER"/>
    <property type="match status" value="1"/>
</dbReference>